<gene>
    <name evidence="5" type="primary">qrcB</name>
    <name evidence="8" type="ordered locus">DVU_0694</name>
</gene>
<proteinExistence type="evidence at protein level"/>
<dbReference type="EMBL" id="AE017285">
    <property type="protein sequence ID" value="AAS95175.1"/>
    <property type="molecule type" value="Genomic_DNA"/>
</dbReference>
<dbReference type="RefSeq" id="WP_010937997.1">
    <property type="nucleotide sequence ID" value="NC_002937.3"/>
</dbReference>
<dbReference type="RefSeq" id="YP_009916.1">
    <property type="nucleotide sequence ID" value="NC_002937.3"/>
</dbReference>
<dbReference type="SMR" id="Q72E84"/>
<dbReference type="IntAct" id="Q72E84">
    <property type="interactions" value="2"/>
</dbReference>
<dbReference type="MINT" id="Q72E84"/>
<dbReference type="STRING" id="882.DVU_0694"/>
<dbReference type="PaxDb" id="882-DVU_0694"/>
<dbReference type="EnsemblBacteria" id="AAS95175">
    <property type="protein sequence ID" value="AAS95175"/>
    <property type="gene ID" value="DVU_0694"/>
</dbReference>
<dbReference type="KEGG" id="dvu:DVU_0694"/>
<dbReference type="PATRIC" id="fig|882.5.peg.650"/>
<dbReference type="eggNOG" id="COG0243">
    <property type="taxonomic scope" value="Bacteria"/>
</dbReference>
<dbReference type="HOGENOM" id="CLU_000422_13_3_7"/>
<dbReference type="OrthoDB" id="9803192at2"/>
<dbReference type="PhylomeDB" id="Q72E84"/>
<dbReference type="BioCyc" id="MetaCyc:MONOMER-22155"/>
<dbReference type="Proteomes" id="UP000002194">
    <property type="component" value="Chromosome"/>
</dbReference>
<dbReference type="GO" id="GO:0042597">
    <property type="term" value="C:periplasmic space"/>
    <property type="evidence" value="ECO:0007669"/>
    <property type="project" value="UniProtKB-SubCell"/>
</dbReference>
<dbReference type="GO" id="GO:0051539">
    <property type="term" value="F:4 iron, 4 sulfur cluster binding"/>
    <property type="evidence" value="ECO:0007669"/>
    <property type="project" value="UniProtKB-KW"/>
</dbReference>
<dbReference type="GO" id="GO:0046872">
    <property type="term" value="F:metal ion binding"/>
    <property type="evidence" value="ECO:0007669"/>
    <property type="project" value="UniProtKB-KW"/>
</dbReference>
<dbReference type="GO" id="GO:0043546">
    <property type="term" value="F:molybdopterin cofactor binding"/>
    <property type="evidence" value="ECO:0007669"/>
    <property type="project" value="InterPro"/>
</dbReference>
<dbReference type="GO" id="GO:0016491">
    <property type="term" value="F:oxidoreductase activity"/>
    <property type="evidence" value="ECO:0007669"/>
    <property type="project" value="UniProtKB-KW"/>
</dbReference>
<dbReference type="GO" id="GO:0009061">
    <property type="term" value="P:anaerobic respiration"/>
    <property type="evidence" value="ECO:0007669"/>
    <property type="project" value="UniProtKB-KW"/>
</dbReference>
<dbReference type="CDD" id="cd02778">
    <property type="entry name" value="MopB_CT_Thiosulfate-R-like"/>
    <property type="match status" value="1"/>
</dbReference>
<dbReference type="Gene3D" id="2.40.40.20">
    <property type="match status" value="1"/>
</dbReference>
<dbReference type="Gene3D" id="3.40.50.740">
    <property type="match status" value="1"/>
</dbReference>
<dbReference type="Gene3D" id="2.20.25.90">
    <property type="entry name" value="ADC-like domains"/>
    <property type="match status" value="1"/>
</dbReference>
<dbReference type="Gene3D" id="3.40.228.10">
    <property type="entry name" value="Dimethylsulfoxide Reductase, domain 2"/>
    <property type="match status" value="1"/>
</dbReference>
<dbReference type="Gene3D" id="3.30.2070.10">
    <property type="entry name" value="Formate dehydrogenase/DMSO reductase"/>
    <property type="match status" value="1"/>
</dbReference>
<dbReference type="InterPro" id="IPR009010">
    <property type="entry name" value="Asp_de-COase-like_dom_sf"/>
</dbReference>
<dbReference type="InterPro" id="IPR053557">
    <property type="entry name" value="Molybdopterin-Qrc_component"/>
</dbReference>
<dbReference type="InterPro" id="IPR006657">
    <property type="entry name" value="MoPterin_dinucl-bd_dom"/>
</dbReference>
<dbReference type="InterPro" id="IPR006656">
    <property type="entry name" value="Mopterin_OxRdtase"/>
</dbReference>
<dbReference type="InterPro" id="IPR006963">
    <property type="entry name" value="Mopterin_OxRdtase_4Fe-4S_dom"/>
</dbReference>
<dbReference type="InterPro" id="IPR050612">
    <property type="entry name" value="Prok_Mopterin_Oxidored"/>
</dbReference>
<dbReference type="InterPro" id="IPR006311">
    <property type="entry name" value="TAT_signal"/>
</dbReference>
<dbReference type="NCBIfam" id="NF041783">
    <property type="entry name" value="mnquin_red_QrcB"/>
    <property type="match status" value="1"/>
</dbReference>
<dbReference type="PANTHER" id="PTHR43742:SF9">
    <property type="entry name" value="TETRATHIONATE REDUCTASE SUBUNIT A"/>
    <property type="match status" value="1"/>
</dbReference>
<dbReference type="PANTHER" id="PTHR43742">
    <property type="entry name" value="TRIMETHYLAMINE-N-OXIDE REDUCTASE"/>
    <property type="match status" value="1"/>
</dbReference>
<dbReference type="Pfam" id="PF00384">
    <property type="entry name" value="Molybdopterin"/>
    <property type="match status" value="1"/>
</dbReference>
<dbReference type="Pfam" id="PF01568">
    <property type="entry name" value="Molydop_binding"/>
    <property type="match status" value="1"/>
</dbReference>
<dbReference type="SMART" id="SM00926">
    <property type="entry name" value="Molybdop_Fe4S4"/>
    <property type="match status" value="1"/>
</dbReference>
<dbReference type="SUPFAM" id="SSF50692">
    <property type="entry name" value="ADC-like"/>
    <property type="match status" value="1"/>
</dbReference>
<dbReference type="SUPFAM" id="SSF53706">
    <property type="entry name" value="Formate dehydrogenase/DMSO reductase, domains 1-3"/>
    <property type="match status" value="1"/>
</dbReference>
<dbReference type="PROSITE" id="PS51669">
    <property type="entry name" value="4FE4S_MOW_BIS_MGD"/>
    <property type="match status" value="1"/>
</dbReference>
<dbReference type="PROSITE" id="PS51318">
    <property type="entry name" value="TAT"/>
    <property type="match status" value="1"/>
</dbReference>
<reference key="1">
    <citation type="journal article" date="2004" name="Nat. Biotechnol.">
        <title>The genome sequence of the anaerobic, sulfate-reducing bacterium Desulfovibrio vulgaris Hildenborough.</title>
        <authorList>
            <person name="Heidelberg J.F."/>
            <person name="Seshadri R."/>
            <person name="Haveman S.A."/>
            <person name="Hemme C.L."/>
            <person name="Paulsen I.T."/>
            <person name="Kolonay J.F."/>
            <person name="Eisen J.A."/>
            <person name="Ward N.L."/>
            <person name="Methe B.A."/>
            <person name="Brinkac L.M."/>
            <person name="Daugherty S.C."/>
            <person name="DeBoy R.T."/>
            <person name="Dodson R.J."/>
            <person name="Durkin A.S."/>
            <person name="Madupu R."/>
            <person name="Nelson W.C."/>
            <person name="Sullivan S.A."/>
            <person name="Fouts D.E."/>
            <person name="Haft D.H."/>
            <person name="Selengut J."/>
            <person name="Peterson J.D."/>
            <person name="Davidsen T.M."/>
            <person name="Zafar N."/>
            <person name="Zhou L."/>
            <person name="Radune D."/>
            <person name="Dimitrov G."/>
            <person name="Hance M."/>
            <person name="Tran K."/>
            <person name="Khouri H.M."/>
            <person name="Gill J."/>
            <person name="Utterback T.R."/>
            <person name="Feldblyum T.V."/>
            <person name="Wall J.D."/>
            <person name="Voordouw G."/>
            <person name="Fraser C.M."/>
        </authorList>
    </citation>
    <scope>NUCLEOTIDE SEQUENCE [LARGE SCALE GENOMIC DNA]</scope>
    <source>
        <strain>ATCC 29579 / DSM 644 / CCUG 34227 / NCIMB 8303 / VKM B-1760 / Hildenborough</strain>
    </source>
</reference>
<reference key="2">
    <citation type="journal article" date="2010" name="J. Biol. Chem.">
        <title>The Qrc membrane complex, related to the alternative complex III, is a menaquinone reductase involved in sulfate respiration.</title>
        <authorList>
            <person name="Venceslau S.S."/>
            <person name="Lino R.R."/>
            <person name="Pereira I.A."/>
        </authorList>
    </citation>
    <scope>PROTEIN SEQUENCE OF N-TERMINUS</scope>
    <scope>FUNCTION</scope>
    <scope>CATALYTIC ACTIVITY</scope>
    <scope>COFACTOR</scope>
    <scope>SUBUNIT</scope>
    <scope>SUBCELLULAR LOCATION</scope>
    <source>
        <strain>ATCC 29579 / DSM 644 / CCUG 34227 / NCIMB 8303 / VKM B-1760 / Hildenborough</strain>
    </source>
</reference>
<reference key="3">
    <citation type="journal article" date="2011" name="FEBS Lett.">
        <title>EPR characterization of the new Qrc complex from sulfate reducing bacteria and its ability to form a supercomplex with hydrogenase and TpIc3.</title>
        <authorList>
            <person name="Venceslau S.S."/>
            <person name="Matos D."/>
            <person name="Pereira I.A."/>
        </authorList>
    </citation>
    <scope>INTERACTION WITH [NIFE] HYDROGENASE AND TPIC(3)</scope>
    <source>
        <strain>ATCC 29579 / DSM 644 / CCUG 34227 / NCIMB 8303 / VKM B-1760 / Hildenborough</strain>
    </source>
</reference>
<evidence type="ECO:0000255" key="1">
    <source>
        <dbReference type="PROSITE-ProRule" id="PRU00648"/>
    </source>
</evidence>
<evidence type="ECO:0000255" key="2">
    <source>
        <dbReference type="PROSITE-ProRule" id="PRU01004"/>
    </source>
</evidence>
<evidence type="ECO:0000269" key="3">
    <source>
    </source>
</evidence>
<evidence type="ECO:0000269" key="4">
    <source>
    </source>
</evidence>
<evidence type="ECO:0000303" key="5">
    <source>
    </source>
</evidence>
<evidence type="ECO:0000305" key="6"/>
<evidence type="ECO:0000305" key="7">
    <source>
    </source>
</evidence>
<evidence type="ECO:0000312" key="8">
    <source>
        <dbReference type="EMBL" id="AAS95175.1"/>
    </source>
</evidence>
<sequence>MALDRRGFLKFIGGATAGILATPVVWKGLDDVSIWSQNWSWIPRNIKGANSYVPTVSKLCPTGIGVRVRLVDGRPVRVIGNPEHPLSKGGVSSIAAAEVQMLYSPARMKRPLKRSPDGAYVMISWEEAEAMLLDGLKAAKGGDALACISGDDNGTINELLSAFVQQSGSKSFFLMPGEAQPAAKAWDLMGGEGQIGYDIEKSDFVLAIGANVLEAWGTAIRNRHAFGASHPHGAEPTAQFVYAGPVLNNTATGADDWLPIRPGTESAFALGLAHLLIKAGASSSAPDFDAFRSLAASFSPEKVAAQTGVDAKALTALAQALAKAKHPLVIVGSEFSQGAGAAPVMAGIALNMLLGSVNRDGGLRALPVARKVVPAGMDRKAMLQQDLTLWASAIASGKAKAPKAMLVYEANPVYALPQGSAFKDTLAKVPFKVAFTSFLDETAMQCDLVIPVSMGLERLDDVCTPYGCGEVVYSLATPVTAPLFDTKPAGDALIALGGKLGLDLGVASFEDMLKAKAAAHGADFDKLAEGTAFTSRATVGANLSFRPDVLSKALDVKAPALPLALAPVMKLNMGTSKTAIPPFNTKTIRRWEVQGKEGYVMLNGATARKLGLAQHDRVVLSNPTGKVTVRVNIFEGVMNDTVAMPLGFGHTAFDEFSKGKGENVMHLLAPSTEPVTGLAVWTGAGVNIAKA</sequence>
<accession>Q72E84</accession>
<name>QRCB_NITV2</name>
<feature type="signal peptide" description="Tat-type signal" evidence="1">
    <location>
        <begin position="1"/>
        <end position="27"/>
    </location>
</feature>
<feature type="chain" id="PRO_0000437999" description="Menaquinone reductase, molybdopterin-binding-like subunit">
    <location>
        <begin position="28"/>
        <end position="691"/>
    </location>
</feature>
<feature type="domain" description="4Fe-4S Mo/W bis-MGD-type" evidence="2">
    <location>
        <begin position="50"/>
        <end position="106"/>
    </location>
</feature>
<organism>
    <name type="scientific">Nitratidesulfovibrio vulgaris (strain ATCC 29579 / DSM 644 / CCUG 34227 / NCIMB 8303 / VKM B-1760 / Hildenborough)</name>
    <name type="common">Desulfovibrio vulgaris</name>
    <dbReference type="NCBI Taxonomy" id="882"/>
    <lineage>
        <taxon>Bacteria</taxon>
        <taxon>Pseudomonadati</taxon>
        <taxon>Thermodesulfobacteriota</taxon>
        <taxon>Desulfovibrionia</taxon>
        <taxon>Desulfovibrionales</taxon>
        <taxon>Desulfovibrionaceae</taxon>
        <taxon>Nitratidesulfovibrio</taxon>
    </lineage>
</organism>
<protein>
    <recommendedName>
        <fullName evidence="7">Menaquinone reductase, molybdopterin-binding-like subunit</fullName>
    </recommendedName>
    <alternativeName>
        <fullName evidence="5">Quinone reductase complex subunit B</fullName>
    </alternativeName>
    <alternativeName>
        <fullName evidence="5">Type I cytochrome c3:menaquinone oxidoreductase subunit B</fullName>
    </alternativeName>
</protein>
<keyword id="KW-0004">4Fe-4S</keyword>
<keyword id="KW-0903">Direct protein sequencing</keyword>
<keyword id="KW-0249">Electron transport</keyword>
<keyword id="KW-0408">Iron</keyword>
<keyword id="KW-0411">Iron-sulfur</keyword>
<keyword id="KW-0479">Metal-binding</keyword>
<keyword id="KW-0500">Molybdenum</keyword>
<keyword id="KW-0560">Oxidoreductase</keyword>
<keyword id="KW-0574">Periplasm</keyword>
<keyword id="KW-1185">Reference proteome</keyword>
<keyword id="KW-0732">Signal</keyword>
<keyword id="KW-0763">Sulfate respiration</keyword>
<keyword id="KW-0813">Transport</keyword>
<comment type="function">
    <text evidence="3">Component of the respiratory Qrc complex, that catalyzes the reduction of the menaquinone pool using electrons transferred from the reduced periplasmic cytochrome c3, and which is probably involved in sulfate respiration. Is likely essential for growth on H(2) or formate since the periplasmic hydrogenases and/or formate dehydrogenases act as primary electron donors for the Qrc complex. The function of the QrcB subunit is unknown; in the absence of a catalytic site, it may provide a structural scaffold for the other subunits.</text>
</comment>
<comment type="cofactor">
    <text evidence="3">There is no molybdenum or tungsten pterin cofactor present in the Qrc complex, despite the similarity of QrcB to molybdopterin-containing oxidoreductases.</text>
</comment>
<comment type="subunit">
    <text evidence="3 4">The Qrc complex is composed of four subunits: QrcA, QrcB, QrcC and QrcD (PubMed:20498375). Can form a supercomplex with the [NiFe] hydrogenase HynA1 and the tetraheme Type I cytochrome c3 TpIc(3), its physiological electron donors (PubMed:21651911).</text>
</comment>
<comment type="interaction">
    <interactant intactId="EBI-6974672">
        <id>Q72E84</id>
    </interactant>
    <interactant intactId="EBI-10070807">
        <id>Q72E85</id>
        <label>qrcC</label>
    </interactant>
    <organismsDiffer>false</organismsDiffer>
    <experiments>2</experiments>
</comment>
<comment type="subcellular location">
    <subcellularLocation>
        <location evidence="7">Periplasm</location>
    </subcellularLocation>
</comment>
<comment type="PTM">
    <text evidence="1">Predicted to be exported by the Tat system. The position of the signal peptide cleavage has not been experimentally proven.</text>
</comment>
<comment type="similarity">
    <text evidence="6">Belongs to the prokaryotic molybdopterin-containing oxidoreductase family.</text>
</comment>